<accession>P46237</accession>
<reference key="1">
    <citation type="journal article" date="1994" name="Gene">
        <title>The use of conserved cellulase family-specific sequences to clone cellulase homologue cDNAs from Fusarium oxysporum.</title>
        <authorList>
            <person name="Sheppard P.O."/>
            <person name="Grant F.J."/>
            <person name="Oort P.J."/>
            <person name="Sprecher C.A."/>
            <person name="Foster D.C."/>
            <person name="Hagen F.S."/>
            <person name="Upshall A."/>
            <person name="McKnight G.L."/>
            <person name="O'Hara P.J."/>
        </authorList>
    </citation>
    <scope>NUCLEOTIDE SEQUENCE [MRNA]</scope>
</reference>
<reference key="2">
    <citation type="journal article" date="1996" name="Biochemistry">
        <title>Structure of the Fusarium oxysporum endoglucanase I with a nonhydrolyzable substrate analogue: substrate distortion gives rise to the preferred axial orientation for the leaving group.</title>
        <authorList>
            <person name="Sulzenbacher G."/>
            <person name="Driguez H."/>
            <person name="Henrissat B."/>
            <person name="Schuelein M."/>
            <person name="Davies G.J."/>
        </authorList>
    </citation>
    <scope>X-RAY CRYSTALLOGRAPHY (2.7 ANGSTROMS)</scope>
    <scope>PYROGLUTAMATE FORMATION AT GLN-19</scope>
</reference>
<reference key="3">
    <citation type="journal article" date="1997" name="Biochemistry">
        <title>Structure of the endoglucanase I from Fusarium oxysporum: native, cellobiose, and 3,4-epoxybutyl beta-D-cellobioside-inhibited forms, at 2.3-A resolution.</title>
        <authorList>
            <person name="Sulzenbacher G."/>
            <person name="Schuelein M."/>
            <person name="Davies G.J."/>
        </authorList>
    </citation>
    <scope>X-RAY CRYSTALLOGRAPHY (2.3 ANGSTROMS)</scope>
</reference>
<protein>
    <recommendedName>
        <fullName>Endoglucanase type C</fullName>
        <ecNumber>3.2.1.4</ecNumber>
    </recommendedName>
    <alternativeName>
        <fullName>Cellulase</fullName>
    </alternativeName>
    <alternativeName>
        <fullName>Endo-1,4-beta-glucanase</fullName>
    </alternativeName>
    <alternativeName>
        <fullName>Endoglucanase I</fullName>
        <shortName>EG I</shortName>
    </alternativeName>
</protein>
<comment type="catalytic activity">
    <reaction>
        <text>Endohydrolysis of (1-&gt;4)-beta-D-glucosidic linkages in cellulose, lichenin and cereal beta-D-glucans.</text>
        <dbReference type="EC" id="3.2.1.4"/>
    </reaction>
</comment>
<comment type="similarity">
    <text evidence="3">Belongs to the glycosyl hydrolase 7 (cellulase C) family.</text>
</comment>
<keyword id="KW-0002">3D-structure</keyword>
<keyword id="KW-0119">Carbohydrate metabolism</keyword>
<keyword id="KW-0136">Cellulose degradation</keyword>
<keyword id="KW-1015">Disulfide bond</keyword>
<keyword id="KW-0325">Glycoprotein</keyword>
<keyword id="KW-0326">Glycosidase</keyword>
<keyword id="KW-0378">Hydrolase</keyword>
<keyword id="KW-0624">Polysaccharide degradation</keyword>
<keyword id="KW-0873">Pyrrolidone carboxylic acid</keyword>
<keyword id="KW-0732">Signal</keyword>
<dbReference type="EC" id="3.2.1.4"/>
<dbReference type="EMBL" id="L29378">
    <property type="protein sequence ID" value="AAA65586.1"/>
    <property type="molecule type" value="mRNA"/>
</dbReference>
<dbReference type="PDB" id="1OVW">
    <property type="method" value="X-ray"/>
    <property type="resolution" value="2.70 A"/>
    <property type="chains" value="A/B/C/D=20-416"/>
</dbReference>
<dbReference type="PDB" id="2OVW">
    <property type="method" value="X-ray"/>
    <property type="resolution" value="2.30 A"/>
    <property type="chains" value="A/B/C/D=20-429"/>
</dbReference>
<dbReference type="PDB" id="3OVW">
    <property type="method" value="X-ray"/>
    <property type="resolution" value="2.30 A"/>
    <property type="chains" value="A/B=20-429"/>
</dbReference>
<dbReference type="PDB" id="4OVW">
    <property type="method" value="X-ray"/>
    <property type="resolution" value="2.30 A"/>
    <property type="chains" value="A/B=20-429"/>
</dbReference>
<dbReference type="PDBsum" id="1OVW"/>
<dbReference type="PDBsum" id="2OVW"/>
<dbReference type="PDBsum" id="3OVW"/>
<dbReference type="PDBsum" id="4OVW"/>
<dbReference type="SMR" id="P46237"/>
<dbReference type="CAZy" id="GH7">
    <property type="family name" value="Glycoside Hydrolase Family 7"/>
</dbReference>
<dbReference type="VEuPathDB" id="FungiDB:FOC1_g10015774"/>
<dbReference type="VEuPathDB" id="FungiDB:FOC4_g10015049"/>
<dbReference type="VEuPathDB" id="FungiDB:FOIG_01874"/>
<dbReference type="VEuPathDB" id="FungiDB:FOMG_10993"/>
<dbReference type="VEuPathDB" id="FungiDB:FOXG_02912"/>
<dbReference type="VEuPathDB" id="FungiDB:FOZG_09209"/>
<dbReference type="VEuPathDB" id="FungiDB:HZS61_015031"/>
<dbReference type="OrthoDB" id="412382at2759"/>
<dbReference type="EvolutionaryTrace" id="P46237"/>
<dbReference type="GO" id="GO:0008810">
    <property type="term" value="F:cellulase activity"/>
    <property type="evidence" value="ECO:0007669"/>
    <property type="project" value="UniProtKB-EC"/>
</dbReference>
<dbReference type="GO" id="GO:0030245">
    <property type="term" value="P:cellulose catabolic process"/>
    <property type="evidence" value="ECO:0007669"/>
    <property type="project" value="UniProtKB-KW"/>
</dbReference>
<dbReference type="CDD" id="cd07999">
    <property type="entry name" value="GH7_CBH_EG"/>
    <property type="match status" value="1"/>
</dbReference>
<dbReference type="Gene3D" id="2.70.100.10">
    <property type="entry name" value="Glycoside hydrolase, family 7, domain"/>
    <property type="match status" value="1"/>
</dbReference>
<dbReference type="InterPro" id="IPR013320">
    <property type="entry name" value="ConA-like_dom_sf"/>
</dbReference>
<dbReference type="InterPro" id="IPR001722">
    <property type="entry name" value="Glyco_hydro_7"/>
</dbReference>
<dbReference type="InterPro" id="IPR037019">
    <property type="entry name" value="Glyco_hydro_7_sf"/>
</dbReference>
<dbReference type="PANTHER" id="PTHR33753">
    <property type="entry name" value="1,4-BETA-D-GLUCAN CELLOBIOHYDROLASE B"/>
    <property type="match status" value="1"/>
</dbReference>
<dbReference type="PANTHER" id="PTHR33753:SF1">
    <property type="entry name" value="ENDO-BETA-1,4-GLUCANASE CELB"/>
    <property type="match status" value="1"/>
</dbReference>
<dbReference type="Pfam" id="PF00840">
    <property type="entry name" value="Glyco_hydro_7"/>
    <property type="match status" value="1"/>
</dbReference>
<dbReference type="PRINTS" id="PR00734">
    <property type="entry name" value="GLHYDRLASE7"/>
</dbReference>
<dbReference type="SUPFAM" id="SSF49899">
    <property type="entry name" value="Concanavalin A-like lectins/glucanases"/>
    <property type="match status" value="1"/>
</dbReference>
<sequence length="429" mass="46445">MKSLSLILSALAVQVAVAQTPDKAKEQHPKLETYRCTKASGCKKQTNYIVADAGIHGIRQKNGAGCGDWGQKPNATACPDEASCAKNCILSGMDSNAYKNAGITTSGNKLRLQQLINNQLVSPRVYLLEENKKKYEMLHLTGTEFSFDVEMEKLPCGMNGALYLSEMPQDGGKSTSRNSKAGAYYGAGYCDAQCYVTPFINGVGNIKGQGVCCNELDIWEANSRATHIAPHPCSKPGLYGCTGDECGSSGICDKAGCGWNHNRINVTDFYGRGKQYKVDSTRKFTVTSQFVANKQGDLIELHRHYIQDNKVIESAVVNISGPPKINFINDKYCAATGANEYMRLGGTKQMGDAMSRGMVLAMSVWWSEGDFMAWLDQGVAGPCDATEGDPKNIVKVQPNPEVTFSNIRIGEIGSTSSVKAPAYPGPHRL</sequence>
<feature type="signal peptide">
    <location>
        <begin position="1"/>
        <end position="18"/>
    </location>
</feature>
<feature type="chain" id="PRO_0000007912" description="Endoglucanase type C">
    <location>
        <begin position="19"/>
        <end position="429"/>
    </location>
</feature>
<feature type="active site" description="Nucleophile" evidence="1">
    <location>
        <position position="215"/>
    </location>
</feature>
<feature type="active site" description="Proton donor" evidence="1">
    <location>
        <position position="220"/>
    </location>
</feature>
<feature type="modified residue" description="Pyrrolidone carboxylic acid" evidence="2">
    <location>
        <position position="19"/>
    </location>
</feature>
<feature type="glycosylation site" description="N-linked (GlcNAc...) asparagine">
    <location>
        <position position="74"/>
    </location>
</feature>
<feature type="glycosylation site" description="N-linked (GlcNAc...) asparagine">
    <location>
        <position position="265"/>
    </location>
</feature>
<feature type="glycosylation site" description="N-linked (GlcNAc...) asparagine">
    <location>
        <position position="318"/>
    </location>
</feature>
<feature type="disulfide bond">
    <location>
        <begin position="36"/>
        <end position="42"/>
    </location>
</feature>
<feature type="disulfide bond">
    <location>
        <begin position="66"/>
        <end position="88"/>
    </location>
</feature>
<feature type="disulfide bond">
    <location>
        <begin position="78"/>
        <end position="84"/>
    </location>
</feature>
<feature type="disulfide bond">
    <location>
        <begin position="156"/>
        <end position="383"/>
    </location>
</feature>
<feature type="disulfide bond">
    <location>
        <begin position="190"/>
        <end position="213"/>
    </location>
</feature>
<feature type="disulfide bond">
    <location>
        <begin position="194"/>
        <end position="212"/>
    </location>
</feature>
<feature type="disulfide bond">
    <location>
        <begin position="233"/>
        <end position="252"/>
    </location>
</feature>
<feature type="disulfide bond">
    <location>
        <begin position="241"/>
        <end position="246"/>
    </location>
</feature>
<feature type="disulfide bond">
    <location>
        <begin position="257"/>
        <end position="333"/>
    </location>
</feature>
<feature type="strand" evidence="4">
    <location>
        <begin position="30"/>
        <end position="37"/>
    </location>
</feature>
<feature type="turn" evidence="4">
    <location>
        <begin position="38"/>
        <end position="40"/>
    </location>
</feature>
<feature type="strand" evidence="4">
    <location>
        <begin position="41"/>
        <end position="51"/>
    </location>
</feature>
<feature type="helix" evidence="4">
    <location>
        <begin position="53"/>
        <end position="56"/>
    </location>
</feature>
<feature type="turn" evidence="4">
    <location>
        <begin position="75"/>
        <end position="77"/>
    </location>
</feature>
<feature type="helix" evidence="4">
    <location>
        <begin position="81"/>
        <end position="87"/>
    </location>
</feature>
<feature type="helix" evidence="4">
    <location>
        <begin position="95"/>
        <end position="100"/>
    </location>
</feature>
<feature type="strand" evidence="4">
    <location>
        <begin position="103"/>
        <end position="106"/>
    </location>
</feature>
<feature type="strand" evidence="4">
    <location>
        <begin position="109"/>
        <end position="116"/>
    </location>
</feature>
<feature type="strand" evidence="4">
    <location>
        <begin position="124"/>
        <end position="128"/>
    </location>
</feature>
<feature type="strand" evidence="4">
    <location>
        <begin position="132"/>
        <end position="135"/>
    </location>
</feature>
<feature type="strand" evidence="4">
    <location>
        <begin position="144"/>
        <end position="150"/>
    </location>
</feature>
<feature type="strand" evidence="4">
    <location>
        <begin position="158"/>
        <end position="165"/>
    </location>
</feature>
<feature type="turn" evidence="4">
    <location>
        <begin position="169"/>
        <end position="172"/>
    </location>
</feature>
<feature type="helix" evidence="4">
    <location>
        <begin position="173"/>
        <end position="175"/>
    </location>
</feature>
<feature type="helix" evidence="4">
    <location>
        <begin position="183"/>
        <end position="185"/>
    </location>
</feature>
<feature type="strand" evidence="4">
    <location>
        <begin position="198"/>
        <end position="200"/>
    </location>
</feature>
<feature type="strand" evidence="4">
    <location>
        <begin position="210"/>
        <end position="212"/>
    </location>
</feature>
<feature type="strand" evidence="4">
    <location>
        <begin position="215"/>
        <end position="221"/>
    </location>
</feature>
<feature type="strand" evidence="4">
    <location>
        <begin position="226"/>
        <end position="231"/>
    </location>
</feature>
<feature type="strand" evidence="4">
    <location>
        <begin position="233"/>
        <end position="235"/>
    </location>
</feature>
<feature type="strand" evidence="4">
    <location>
        <begin position="239"/>
        <end position="241"/>
    </location>
</feature>
<feature type="helix" evidence="4">
    <location>
        <begin position="243"/>
        <end position="246"/>
    </location>
</feature>
<feature type="strand" evidence="4">
    <location>
        <begin position="250"/>
        <end position="252"/>
    </location>
</feature>
<feature type="helix" evidence="4">
    <location>
        <begin position="261"/>
        <end position="264"/>
    </location>
</feature>
<feature type="strand" evidence="4">
    <location>
        <begin position="269"/>
        <end position="273"/>
    </location>
</feature>
<feature type="strand" evidence="4">
    <location>
        <begin position="276"/>
        <end position="279"/>
    </location>
</feature>
<feature type="strand" evidence="4">
    <location>
        <begin position="284"/>
        <end position="292"/>
    </location>
</feature>
<feature type="strand" evidence="4">
    <location>
        <begin position="298"/>
        <end position="307"/>
    </location>
</feature>
<feature type="strand" evidence="4">
    <location>
        <begin position="310"/>
        <end position="313"/>
    </location>
</feature>
<feature type="strand" evidence="4">
    <location>
        <begin position="319"/>
        <end position="322"/>
    </location>
</feature>
<feature type="strand" evidence="4">
    <location>
        <begin position="326"/>
        <end position="328"/>
    </location>
</feature>
<feature type="helix" evidence="4">
    <location>
        <begin position="330"/>
        <end position="335"/>
    </location>
</feature>
<feature type="helix" evidence="4">
    <location>
        <begin position="339"/>
        <end position="343"/>
    </location>
</feature>
<feature type="helix" evidence="4">
    <location>
        <begin position="346"/>
        <end position="356"/>
    </location>
</feature>
<feature type="strand" evidence="4">
    <location>
        <begin position="358"/>
        <end position="366"/>
    </location>
</feature>
<feature type="turn" evidence="4">
    <location>
        <begin position="368"/>
        <end position="372"/>
    </location>
</feature>
<feature type="helix" evidence="4">
    <location>
        <begin position="373"/>
        <end position="376"/>
    </location>
</feature>
<feature type="helix" evidence="4">
    <location>
        <begin position="378"/>
        <end position="380"/>
    </location>
</feature>
<feature type="helix" evidence="4">
    <location>
        <begin position="390"/>
        <end position="396"/>
    </location>
</feature>
<feature type="strand" evidence="4">
    <location>
        <begin position="401"/>
        <end position="411"/>
    </location>
</feature>
<proteinExistence type="evidence at protein level"/>
<organism>
    <name type="scientific">Fusarium oxysporum</name>
    <name type="common">Fusarium vascular wilt</name>
    <dbReference type="NCBI Taxonomy" id="5507"/>
    <lineage>
        <taxon>Eukaryota</taxon>
        <taxon>Fungi</taxon>
        <taxon>Dikarya</taxon>
        <taxon>Ascomycota</taxon>
        <taxon>Pezizomycotina</taxon>
        <taxon>Sordariomycetes</taxon>
        <taxon>Hypocreomycetidae</taxon>
        <taxon>Hypocreales</taxon>
        <taxon>Nectriaceae</taxon>
        <taxon>Fusarium</taxon>
        <taxon>Fusarium oxysporum species complex</taxon>
    </lineage>
</organism>
<name>GUNC_FUSOX</name>
<evidence type="ECO:0000250" key="1"/>
<evidence type="ECO:0000269" key="2">
    <source>
    </source>
</evidence>
<evidence type="ECO:0000305" key="3"/>
<evidence type="ECO:0007829" key="4">
    <source>
        <dbReference type="PDB" id="2OVW"/>
    </source>
</evidence>